<organism>
    <name type="scientific">Psychrobacter sp. (strain PRwf-1)</name>
    <dbReference type="NCBI Taxonomy" id="349106"/>
    <lineage>
        <taxon>Bacteria</taxon>
        <taxon>Pseudomonadati</taxon>
        <taxon>Pseudomonadota</taxon>
        <taxon>Gammaproteobacteria</taxon>
        <taxon>Moraxellales</taxon>
        <taxon>Moraxellaceae</taxon>
        <taxon>Psychrobacter</taxon>
    </lineage>
</organism>
<comment type="function">
    <text evidence="1">Catalyzes the specific phosphorylation of the 3-hydroxyl group of shikimic acid using ATP as a cosubstrate.</text>
</comment>
<comment type="catalytic activity">
    <reaction evidence="1">
        <text>shikimate + ATP = 3-phosphoshikimate + ADP + H(+)</text>
        <dbReference type="Rhea" id="RHEA:13121"/>
        <dbReference type="ChEBI" id="CHEBI:15378"/>
        <dbReference type="ChEBI" id="CHEBI:30616"/>
        <dbReference type="ChEBI" id="CHEBI:36208"/>
        <dbReference type="ChEBI" id="CHEBI:145989"/>
        <dbReference type="ChEBI" id="CHEBI:456216"/>
        <dbReference type="EC" id="2.7.1.71"/>
    </reaction>
</comment>
<comment type="cofactor">
    <cofactor evidence="1">
        <name>Mg(2+)</name>
        <dbReference type="ChEBI" id="CHEBI:18420"/>
    </cofactor>
    <text evidence="1">Binds 1 Mg(2+) ion per subunit.</text>
</comment>
<comment type="pathway">
    <text evidence="1">Metabolic intermediate biosynthesis; chorismate biosynthesis; chorismate from D-erythrose 4-phosphate and phosphoenolpyruvate: step 5/7.</text>
</comment>
<comment type="subunit">
    <text evidence="1">Monomer.</text>
</comment>
<comment type="subcellular location">
    <subcellularLocation>
        <location evidence="1">Cytoplasm</location>
    </subcellularLocation>
</comment>
<comment type="similarity">
    <text evidence="1">Belongs to the shikimate kinase family.</text>
</comment>
<proteinExistence type="inferred from homology"/>
<reference key="1">
    <citation type="submission" date="2007-05" db="EMBL/GenBank/DDBJ databases">
        <title>Complete sequence of chromosome of Psychrobacter sp. PRwf-1.</title>
        <authorList>
            <consortium name="US DOE Joint Genome Institute"/>
            <person name="Copeland A."/>
            <person name="Lucas S."/>
            <person name="Lapidus A."/>
            <person name="Barry K."/>
            <person name="Detter J.C."/>
            <person name="Glavina del Rio T."/>
            <person name="Hammon N."/>
            <person name="Israni S."/>
            <person name="Dalin E."/>
            <person name="Tice H."/>
            <person name="Pitluck S."/>
            <person name="Chain P."/>
            <person name="Malfatti S."/>
            <person name="Shin M."/>
            <person name="Vergez L."/>
            <person name="Schmutz J."/>
            <person name="Larimer F."/>
            <person name="Land M."/>
            <person name="Hauser L."/>
            <person name="Kyrpides N."/>
            <person name="Kim E."/>
            <person name="Tiedje J."/>
            <person name="Richardson P."/>
        </authorList>
    </citation>
    <scope>NUCLEOTIDE SEQUENCE [LARGE SCALE GENOMIC DNA]</scope>
    <source>
        <strain>PRwf-1</strain>
    </source>
</reference>
<evidence type="ECO:0000255" key="1">
    <source>
        <dbReference type="HAMAP-Rule" id="MF_00109"/>
    </source>
</evidence>
<keyword id="KW-0028">Amino-acid biosynthesis</keyword>
<keyword id="KW-0057">Aromatic amino acid biosynthesis</keyword>
<keyword id="KW-0067">ATP-binding</keyword>
<keyword id="KW-0963">Cytoplasm</keyword>
<keyword id="KW-0418">Kinase</keyword>
<keyword id="KW-0460">Magnesium</keyword>
<keyword id="KW-0479">Metal-binding</keyword>
<keyword id="KW-0547">Nucleotide-binding</keyword>
<keyword id="KW-0808">Transferase</keyword>
<name>AROK_PSYWF</name>
<protein>
    <recommendedName>
        <fullName evidence="1">Shikimate kinase</fullName>
        <shortName evidence="1">SK</shortName>
        <ecNumber evidence="1">2.7.1.71</ecNumber>
    </recommendedName>
</protein>
<gene>
    <name evidence="1" type="primary">aroK</name>
    <name type="ordered locus">PsycPRwf_0400</name>
</gene>
<feature type="chain" id="PRO_1000071324" description="Shikimate kinase">
    <location>
        <begin position="1"/>
        <end position="180"/>
    </location>
</feature>
<feature type="binding site" evidence="1">
    <location>
        <begin position="15"/>
        <end position="20"/>
    </location>
    <ligand>
        <name>ATP</name>
        <dbReference type="ChEBI" id="CHEBI:30616"/>
    </ligand>
</feature>
<feature type="binding site" evidence="1">
    <location>
        <position position="19"/>
    </location>
    <ligand>
        <name>Mg(2+)</name>
        <dbReference type="ChEBI" id="CHEBI:18420"/>
    </ligand>
</feature>
<feature type="binding site" evidence="1">
    <location>
        <position position="37"/>
    </location>
    <ligand>
        <name>substrate</name>
    </ligand>
</feature>
<feature type="binding site" evidence="1">
    <location>
        <position position="61"/>
    </location>
    <ligand>
        <name>substrate</name>
    </ligand>
</feature>
<feature type="binding site" evidence="1">
    <location>
        <position position="83"/>
    </location>
    <ligand>
        <name>substrate</name>
    </ligand>
</feature>
<feature type="binding site" evidence="1">
    <location>
        <position position="121"/>
    </location>
    <ligand>
        <name>ATP</name>
        <dbReference type="ChEBI" id="CHEBI:30616"/>
    </ligand>
</feature>
<feature type="binding site" evidence="1">
    <location>
        <position position="140"/>
    </location>
    <ligand>
        <name>substrate</name>
    </ligand>
</feature>
<sequence length="180" mass="20132">MQSTLPSLFIVGPMGAGKTTVGKLLAKHLGRDFIDSDHYICEQTGADIPWIFEKEGETGFREREARAIAELTALPNVVLATGGGVVMQPQNRDNLTKQGITIYLRANVDVQLKRTAKDKSRPLLNTPNPRAVLQSLFDVRDPLYREVADIVVETGDGYPRYMLKKIIEALKQHYPEHMKS</sequence>
<accession>A5WCG4</accession>
<dbReference type="EC" id="2.7.1.71" evidence="1"/>
<dbReference type="EMBL" id="CP000713">
    <property type="protein sequence ID" value="ABQ93355.1"/>
    <property type="molecule type" value="Genomic_DNA"/>
</dbReference>
<dbReference type="SMR" id="A5WCG4"/>
<dbReference type="STRING" id="349106.PsycPRwf_0400"/>
<dbReference type="KEGG" id="prw:PsycPRwf_0400"/>
<dbReference type="eggNOG" id="COG0703">
    <property type="taxonomic scope" value="Bacteria"/>
</dbReference>
<dbReference type="HOGENOM" id="CLU_057607_2_2_6"/>
<dbReference type="UniPathway" id="UPA00053">
    <property type="reaction ID" value="UER00088"/>
</dbReference>
<dbReference type="GO" id="GO:0005829">
    <property type="term" value="C:cytosol"/>
    <property type="evidence" value="ECO:0007669"/>
    <property type="project" value="TreeGrafter"/>
</dbReference>
<dbReference type="GO" id="GO:0005524">
    <property type="term" value="F:ATP binding"/>
    <property type="evidence" value="ECO:0007669"/>
    <property type="project" value="UniProtKB-UniRule"/>
</dbReference>
<dbReference type="GO" id="GO:0000287">
    <property type="term" value="F:magnesium ion binding"/>
    <property type="evidence" value="ECO:0007669"/>
    <property type="project" value="UniProtKB-UniRule"/>
</dbReference>
<dbReference type="GO" id="GO:0004765">
    <property type="term" value="F:shikimate kinase activity"/>
    <property type="evidence" value="ECO:0007669"/>
    <property type="project" value="UniProtKB-UniRule"/>
</dbReference>
<dbReference type="GO" id="GO:0008652">
    <property type="term" value="P:amino acid biosynthetic process"/>
    <property type="evidence" value="ECO:0007669"/>
    <property type="project" value="UniProtKB-KW"/>
</dbReference>
<dbReference type="GO" id="GO:0009073">
    <property type="term" value="P:aromatic amino acid family biosynthetic process"/>
    <property type="evidence" value="ECO:0007669"/>
    <property type="project" value="UniProtKB-KW"/>
</dbReference>
<dbReference type="GO" id="GO:0009423">
    <property type="term" value="P:chorismate biosynthetic process"/>
    <property type="evidence" value="ECO:0007669"/>
    <property type="project" value="UniProtKB-UniRule"/>
</dbReference>
<dbReference type="CDD" id="cd00464">
    <property type="entry name" value="SK"/>
    <property type="match status" value="1"/>
</dbReference>
<dbReference type="Gene3D" id="3.40.50.300">
    <property type="entry name" value="P-loop containing nucleotide triphosphate hydrolases"/>
    <property type="match status" value="1"/>
</dbReference>
<dbReference type="HAMAP" id="MF_00109">
    <property type="entry name" value="Shikimate_kinase"/>
    <property type="match status" value="1"/>
</dbReference>
<dbReference type="InterPro" id="IPR027417">
    <property type="entry name" value="P-loop_NTPase"/>
</dbReference>
<dbReference type="InterPro" id="IPR031322">
    <property type="entry name" value="Shikimate/glucono_kinase"/>
</dbReference>
<dbReference type="InterPro" id="IPR000623">
    <property type="entry name" value="Shikimate_kinase/TSH1"/>
</dbReference>
<dbReference type="InterPro" id="IPR023000">
    <property type="entry name" value="Shikimate_kinase_CS"/>
</dbReference>
<dbReference type="PANTHER" id="PTHR21087">
    <property type="entry name" value="SHIKIMATE KINASE"/>
    <property type="match status" value="1"/>
</dbReference>
<dbReference type="PANTHER" id="PTHR21087:SF16">
    <property type="entry name" value="SHIKIMATE KINASE 1, CHLOROPLASTIC"/>
    <property type="match status" value="1"/>
</dbReference>
<dbReference type="Pfam" id="PF01202">
    <property type="entry name" value="SKI"/>
    <property type="match status" value="1"/>
</dbReference>
<dbReference type="PRINTS" id="PR01100">
    <property type="entry name" value="SHIKIMTKNASE"/>
</dbReference>
<dbReference type="SUPFAM" id="SSF52540">
    <property type="entry name" value="P-loop containing nucleoside triphosphate hydrolases"/>
    <property type="match status" value="1"/>
</dbReference>
<dbReference type="PROSITE" id="PS01128">
    <property type="entry name" value="SHIKIMATE_KINASE"/>
    <property type="match status" value="1"/>
</dbReference>